<feature type="signal peptide" evidence="1">
    <location>
        <begin position="1"/>
        <end position="26"/>
    </location>
</feature>
<feature type="chain" id="PRO_5000231743" description="D-(-)-3-hydroxybutyrate oligomer hydrolase">
    <location>
        <begin position="27"/>
        <end position="696"/>
    </location>
</feature>
<feature type="active site" description="Charge relay system" evidence="1">
    <location>
        <position position="309"/>
    </location>
</feature>
<proteinExistence type="inferred from homology"/>
<dbReference type="EC" id="3.1.1.22" evidence="1"/>
<dbReference type="EMBL" id="CP000614">
    <property type="protein sequence ID" value="ABO53791.1"/>
    <property type="molecule type" value="Genomic_DNA"/>
</dbReference>
<dbReference type="ESTHER" id="burvg-hboh">
    <property type="family name" value="OHBut_olig_hydro_put"/>
</dbReference>
<dbReference type="KEGG" id="bvi:Bcep1808_0779"/>
<dbReference type="eggNOG" id="ENOG502Z8QU">
    <property type="taxonomic scope" value="Bacteria"/>
</dbReference>
<dbReference type="HOGENOM" id="CLU_420258_0_0_4"/>
<dbReference type="UniPathway" id="UPA00863"/>
<dbReference type="Proteomes" id="UP000002287">
    <property type="component" value="Chromosome 1"/>
</dbReference>
<dbReference type="GO" id="GO:0005615">
    <property type="term" value="C:extracellular space"/>
    <property type="evidence" value="ECO:0007669"/>
    <property type="project" value="InterPro"/>
</dbReference>
<dbReference type="GO" id="GO:0047989">
    <property type="term" value="F:hydroxybutyrate-dimer hydrolase activity"/>
    <property type="evidence" value="ECO:0007669"/>
    <property type="project" value="UniProtKB-UniRule"/>
</dbReference>
<dbReference type="GO" id="GO:0019605">
    <property type="term" value="P:butyrate metabolic process"/>
    <property type="evidence" value="ECO:0007669"/>
    <property type="project" value="UniProtKB-UniRule"/>
</dbReference>
<dbReference type="HAMAP" id="MF_01906">
    <property type="entry name" value="3HBOH"/>
    <property type="match status" value="1"/>
</dbReference>
<dbReference type="InterPro" id="IPR016582">
    <property type="entry name" value="OHBut_olig_hydro_put"/>
</dbReference>
<dbReference type="Pfam" id="PF10605">
    <property type="entry name" value="3HBOH"/>
    <property type="match status" value="1"/>
</dbReference>
<dbReference type="PIRSF" id="PIRSF011409">
    <property type="entry name" value="HObutyrate_olig_hydrol"/>
    <property type="match status" value="1"/>
</dbReference>
<name>HBOH_BURVG</name>
<protein>
    <recommendedName>
        <fullName evidence="1">D-(-)-3-hydroxybutyrate oligomer hydrolase</fullName>
        <shortName evidence="1">3HB-oligomer hydrolase</shortName>
        <shortName evidence="1">3HBOH</shortName>
        <ecNumber evidence="1">3.1.1.22</ecNumber>
    </recommendedName>
</protein>
<keyword id="KW-0378">Hydrolase</keyword>
<keyword id="KW-0964">Secreted</keyword>
<keyword id="KW-0732">Signal</keyword>
<reference key="1">
    <citation type="submission" date="2007-03" db="EMBL/GenBank/DDBJ databases">
        <title>Complete sequence of chromosome 1 of Burkholderia vietnamiensis G4.</title>
        <authorList>
            <consortium name="US DOE Joint Genome Institute"/>
            <person name="Copeland A."/>
            <person name="Lucas S."/>
            <person name="Lapidus A."/>
            <person name="Barry K."/>
            <person name="Detter J.C."/>
            <person name="Glavina del Rio T."/>
            <person name="Hammon N."/>
            <person name="Israni S."/>
            <person name="Dalin E."/>
            <person name="Tice H."/>
            <person name="Pitluck S."/>
            <person name="Chain P."/>
            <person name="Malfatti S."/>
            <person name="Shin M."/>
            <person name="Vergez L."/>
            <person name="Schmutz J."/>
            <person name="Larimer F."/>
            <person name="Land M."/>
            <person name="Hauser L."/>
            <person name="Kyrpides N."/>
            <person name="Tiedje J."/>
            <person name="Richardson P."/>
        </authorList>
    </citation>
    <scope>NUCLEOTIDE SEQUENCE [LARGE SCALE GENOMIC DNA]</scope>
    <source>
        <strain>G4 / LMG 22486</strain>
    </source>
</reference>
<accession>A4JBY8</accession>
<comment type="function">
    <text evidence="1">Participates in the degradation of poly-3-hydroxybutyrate (PHB). It works downstream of poly(3-hydroxybutyrate) depolymerase, hydrolyzing D(-)-3-hydroxybutyrate oligomers of various length (3HB-oligomers) into 3HB-monomers.</text>
</comment>
<comment type="catalytic activity">
    <reaction evidence="1">
        <text>(3R)-hydroxybutanoate dimer + H2O = 2 (R)-3-hydroxybutanoate + H(+)</text>
        <dbReference type="Rhea" id="RHEA:10172"/>
        <dbReference type="ChEBI" id="CHEBI:10979"/>
        <dbReference type="ChEBI" id="CHEBI:10983"/>
        <dbReference type="ChEBI" id="CHEBI:15377"/>
        <dbReference type="ChEBI" id="CHEBI:15378"/>
        <dbReference type="EC" id="3.1.1.22"/>
    </reaction>
</comment>
<comment type="pathway">
    <text evidence="1">Lipid metabolism; butanoate metabolism.</text>
</comment>
<comment type="subcellular location">
    <subcellularLocation>
        <location evidence="1">Secreted</location>
    </subcellularLocation>
</comment>
<comment type="similarity">
    <text evidence="1">Belongs to the D-(-)-3-hydroxybutyrate oligomer hydrolase family.</text>
</comment>
<evidence type="ECO:0000255" key="1">
    <source>
        <dbReference type="HAMAP-Rule" id="MF_01906"/>
    </source>
</evidence>
<sequence length="696" mass="71688">MDTHGWGSRILVGAALAALTMLGACNGDETAERNQLPVFVSGSVRTTAYDGASDDLLTAGLGKTGLASAAAPAFADPSRPTAAELRRVAIWSNYRALVDMSANGGYGRFWGPNVDLDGNDTLGEGKIAGTEYLAYADDGSGRKNVTLLVQVPASFDPAQPCIVTATSSGSRGVYGAISAAGEWGLKRGCAVAYNDKGGGNGAQELGSNTVTLIDGTLANAVLAGSASLFTANLTSGDLAAFNSRFPNRYAFKHAHSQQNPEHDWGRATLQSVEFAYWALNQQFAPLVDGSHRGVRYRAGDITTIAASVSNGGGAALAAAEQDTRRWITAVVVGEPQINVRMAPNAVVRESGRPVPSFGRPLADYATLANLLEPCAAASASLAGEPYLSALPLATTQSIRTQRCATLAAAGLVSGADTQSQAADALAQLHAAGYLADSDLLQASMWDSQAIPAIAVTYANAYTRSSVADNLCNFSFATTNAATGAVAAPAASPMPAVFGLGNGVPPTAGINLVFNTGAGVDHRLATPDASFAGALCLRQLWTNGMLDMPANVEAVRVNANLQGKPAIIVQGRSDALVPVNHASRAYVAQNSISEGGRSQLVFYEVTNGQHFDAFLPVAGFDTRFVPVHYYNVQALNLMWRHLKSGAPLPPSQVIRTVPRGGTPGAAPALTSANLPPISTAPGANAIAAGAGAIDVPL</sequence>
<organism>
    <name type="scientific">Burkholderia vietnamiensis (strain G4 / LMG 22486)</name>
    <name type="common">Burkholderia cepacia (strain R1808)</name>
    <dbReference type="NCBI Taxonomy" id="269482"/>
    <lineage>
        <taxon>Bacteria</taxon>
        <taxon>Pseudomonadati</taxon>
        <taxon>Pseudomonadota</taxon>
        <taxon>Betaproteobacteria</taxon>
        <taxon>Burkholderiales</taxon>
        <taxon>Burkholderiaceae</taxon>
        <taxon>Burkholderia</taxon>
        <taxon>Burkholderia cepacia complex</taxon>
    </lineage>
</organism>
<gene>
    <name type="ordered locus">Bcep1808_0779</name>
</gene>